<gene>
    <name evidence="1" type="primary">engB</name>
    <name type="ordered locus">XAC0725</name>
</gene>
<reference key="1">
    <citation type="journal article" date="2002" name="Nature">
        <title>Comparison of the genomes of two Xanthomonas pathogens with differing host specificities.</title>
        <authorList>
            <person name="da Silva A.C.R."/>
            <person name="Ferro J.A."/>
            <person name="Reinach F.C."/>
            <person name="Farah C.S."/>
            <person name="Furlan L.R."/>
            <person name="Quaggio R.B."/>
            <person name="Monteiro-Vitorello C.B."/>
            <person name="Van Sluys M.A."/>
            <person name="Almeida N.F. Jr."/>
            <person name="Alves L.M.C."/>
            <person name="do Amaral A.M."/>
            <person name="Bertolini M.C."/>
            <person name="Camargo L.E.A."/>
            <person name="Camarotte G."/>
            <person name="Cannavan F."/>
            <person name="Cardozo J."/>
            <person name="Chambergo F."/>
            <person name="Ciapina L.P."/>
            <person name="Cicarelli R.M.B."/>
            <person name="Coutinho L.L."/>
            <person name="Cursino-Santos J.R."/>
            <person name="El-Dorry H."/>
            <person name="Faria J.B."/>
            <person name="Ferreira A.J.S."/>
            <person name="Ferreira R.C.C."/>
            <person name="Ferro M.I.T."/>
            <person name="Formighieri E.F."/>
            <person name="Franco M.C."/>
            <person name="Greggio C.C."/>
            <person name="Gruber A."/>
            <person name="Katsuyama A.M."/>
            <person name="Kishi L.T."/>
            <person name="Leite R.P."/>
            <person name="Lemos E.G.M."/>
            <person name="Lemos M.V.F."/>
            <person name="Locali E.C."/>
            <person name="Machado M.A."/>
            <person name="Madeira A.M.B.N."/>
            <person name="Martinez-Rossi N.M."/>
            <person name="Martins E.C."/>
            <person name="Meidanis J."/>
            <person name="Menck C.F.M."/>
            <person name="Miyaki C.Y."/>
            <person name="Moon D.H."/>
            <person name="Moreira L.M."/>
            <person name="Novo M.T.M."/>
            <person name="Okura V.K."/>
            <person name="Oliveira M.C."/>
            <person name="Oliveira V.R."/>
            <person name="Pereira H.A."/>
            <person name="Rossi A."/>
            <person name="Sena J.A.D."/>
            <person name="Silva C."/>
            <person name="de Souza R.F."/>
            <person name="Spinola L.A.F."/>
            <person name="Takita M.A."/>
            <person name="Tamura R.E."/>
            <person name="Teixeira E.C."/>
            <person name="Tezza R.I.D."/>
            <person name="Trindade dos Santos M."/>
            <person name="Truffi D."/>
            <person name="Tsai S.M."/>
            <person name="White F.F."/>
            <person name="Setubal J.C."/>
            <person name="Kitajima J.P."/>
        </authorList>
    </citation>
    <scope>NUCLEOTIDE SEQUENCE [LARGE SCALE GENOMIC DNA]</scope>
    <source>
        <strain>306</strain>
    </source>
</reference>
<sequence length="214" mass="23591">MSLLIEQARYHLSAHNARQLPDDGGYEVAFAGRSNAGKSSALNALTRQNALARVSKTPGRTQQLVFFQIQPERYLVDLPGYGYAKVPQDLQAHWQAFIDRYFRTREALRGLVVVMDIRHPLKDYDLQMLGYAAERGLPAHGLLTKADKLGRGQQMQTLQKVKKEVTSRFGDSVTVQTYSGESRQGVDELRGIVGGWLGLDGAPPAAEGEPGQAP</sequence>
<keyword id="KW-0131">Cell cycle</keyword>
<keyword id="KW-0132">Cell division</keyword>
<keyword id="KW-0342">GTP-binding</keyword>
<keyword id="KW-0460">Magnesium</keyword>
<keyword id="KW-0479">Metal-binding</keyword>
<keyword id="KW-0547">Nucleotide-binding</keyword>
<keyword id="KW-0717">Septation</keyword>
<accession>Q8PPG1</accession>
<comment type="function">
    <text evidence="1">Necessary for normal cell division and for the maintenance of normal septation.</text>
</comment>
<comment type="cofactor">
    <cofactor evidence="1">
        <name>Mg(2+)</name>
        <dbReference type="ChEBI" id="CHEBI:18420"/>
    </cofactor>
</comment>
<comment type="similarity">
    <text evidence="1">Belongs to the TRAFAC class TrmE-Era-EngA-EngB-Septin-like GTPase superfamily. EngB GTPase family.</text>
</comment>
<name>ENGB_XANAC</name>
<protein>
    <recommendedName>
        <fullName evidence="1">Probable GTP-binding protein EngB</fullName>
    </recommendedName>
</protein>
<evidence type="ECO:0000255" key="1">
    <source>
        <dbReference type="HAMAP-Rule" id="MF_00321"/>
    </source>
</evidence>
<organism>
    <name type="scientific">Xanthomonas axonopodis pv. citri (strain 306)</name>
    <dbReference type="NCBI Taxonomy" id="190486"/>
    <lineage>
        <taxon>Bacteria</taxon>
        <taxon>Pseudomonadati</taxon>
        <taxon>Pseudomonadota</taxon>
        <taxon>Gammaproteobacteria</taxon>
        <taxon>Lysobacterales</taxon>
        <taxon>Lysobacteraceae</taxon>
        <taxon>Xanthomonas</taxon>
    </lineage>
</organism>
<feature type="chain" id="PRO_0000157802" description="Probable GTP-binding protein EngB">
    <location>
        <begin position="1"/>
        <end position="214"/>
    </location>
</feature>
<feature type="domain" description="EngB-type G" evidence="1">
    <location>
        <begin position="24"/>
        <end position="199"/>
    </location>
</feature>
<feature type="binding site" evidence="1">
    <location>
        <begin position="32"/>
        <end position="39"/>
    </location>
    <ligand>
        <name>GTP</name>
        <dbReference type="ChEBI" id="CHEBI:37565"/>
    </ligand>
</feature>
<feature type="binding site" evidence="1">
    <location>
        <position position="39"/>
    </location>
    <ligand>
        <name>Mg(2+)</name>
        <dbReference type="ChEBI" id="CHEBI:18420"/>
    </ligand>
</feature>
<feature type="binding site" evidence="1">
    <location>
        <begin position="59"/>
        <end position="63"/>
    </location>
    <ligand>
        <name>GTP</name>
        <dbReference type="ChEBI" id="CHEBI:37565"/>
    </ligand>
</feature>
<feature type="binding site" evidence="1">
    <location>
        <position position="61"/>
    </location>
    <ligand>
        <name>Mg(2+)</name>
        <dbReference type="ChEBI" id="CHEBI:18420"/>
    </ligand>
</feature>
<feature type="binding site" evidence="1">
    <location>
        <begin position="77"/>
        <end position="80"/>
    </location>
    <ligand>
        <name>GTP</name>
        <dbReference type="ChEBI" id="CHEBI:37565"/>
    </ligand>
</feature>
<feature type="binding site" evidence="1">
    <location>
        <begin position="144"/>
        <end position="147"/>
    </location>
    <ligand>
        <name>GTP</name>
        <dbReference type="ChEBI" id="CHEBI:37565"/>
    </ligand>
</feature>
<feature type="binding site" evidence="1">
    <location>
        <begin position="178"/>
        <end position="180"/>
    </location>
    <ligand>
        <name>GTP</name>
        <dbReference type="ChEBI" id="CHEBI:37565"/>
    </ligand>
</feature>
<proteinExistence type="inferred from homology"/>
<dbReference type="EMBL" id="AE008923">
    <property type="protein sequence ID" value="AAM35614.1"/>
    <property type="molecule type" value="Genomic_DNA"/>
</dbReference>
<dbReference type="SMR" id="Q8PPG1"/>
<dbReference type="KEGG" id="xac:XAC0725"/>
<dbReference type="eggNOG" id="COG0218">
    <property type="taxonomic scope" value="Bacteria"/>
</dbReference>
<dbReference type="HOGENOM" id="CLU_033732_1_0_6"/>
<dbReference type="Proteomes" id="UP000000576">
    <property type="component" value="Chromosome"/>
</dbReference>
<dbReference type="GO" id="GO:0005829">
    <property type="term" value="C:cytosol"/>
    <property type="evidence" value="ECO:0007669"/>
    <property type="project" value="TreeGrafter"/>
</dbReference>
<dbReference type="GO" id="GO:0005525">
    <property type="term" value="F:GTP binding"/>
    <property type="evidence" value="ECO:0007669"/>
    <property type="project" value="UniProtKB-UniRule"/>
</dbReference>
<dbReference type="GO" id="GO:0046872">
    <property type="term" value="F:metal ion binding"/>
    <property type="evidence" value="ECO:0007669"/>
    <property type="project" value="UniProtKB-KW"/>
</dbReference>
<dbReference type="GO" id="GO:0000917">
    <property type="term" value="P:division septum assembly"/>
    <property type="evidence" value="ECO:0007669"/>
    <property type="project" value="UniProtKB-KW"/>
</dbReference>
<dbReference type="CDD" id="cd01876">
    <property type="entry name" value="YihA_EngB"/>
    <property type="match status" value="1"/>
</dbReference>
<dbReference type="FunFam" id="3.40.50.300:FF:000098">
    <property type="entry name" value="Probable GTP-binding protein EngB"/>
    <property type="match status" value="1"/>
</dbReference>
<dbReference type="Gene3D" id="3.40.50.300">
    <property type="entry name" value="P-loop containing nucleotide triphosphate hydrolases"/>
    <property type="match status" value="1"/>
</dbReference>
<dbReference type="HAMAP" id="MF_00321">
    <property type="entry name" value="GTPase_EngB"/>
    <property type="match status" value="1"/>
</dbReference>
<dbReference type="InterPro" id="IPR030393">
    <property type="entry name" value="G_ENGB_dom"/>
</dbReference>
<dbReference type="InterPro" id="IPR006073">
    <property type="entry name" value="GTP-bd"/>
</dbReference>
<dbReference type="InterPro" id="IPR019987">
    <property type="entry name" value="GTP-bd_ribosome_bio_YsxC"/>
</dbReference>
<dbReference type="InterPro" id="IPR027417">
    <property type="entry name" value="P-loop_NTPase"/>
</dbReference>
<dbReference type="NCBIfam" id="TIGR03598">
    <property type="entry name" value="GTPase_YsxC"/>
    <property type="match status" value="1"/>
</dbReference>
<dbReference type="PANTHER" id="PTHR11649:SF13">
    <property type="entry name" value="ENGB-TYPE G DOMAIN-CONTAINING PROTEIN"/>
    <property type="match status" value="1"/>
</dbReference>
<dbReference type="PANTHER" id="PTHR11649">
    <property type="entry name" value="MSS1/TRME-RELATED GTP-BINDING PROTEIN"/>
    <property type="match status" value="1"/>
</dbReference>
<dbReference type="Pfam" id="PF01926">
    <property type="entry name" value="MMR_HSR1"/>
    <property type="match status" value="1"/>
</dbReference>
<dbReference type="SUPFAM" id="SSF52540">
    <property type="entry name" value="P-loop containing nucleoside triphosphate hydrolases"/>
    <property type="match status" value="1"/>
</dbReference>
<dbReference type="PROSITE" id="PS51706">
    <property type="entry name" value="G_ENGB"/>
    <property type="match status" value="1"/>
</dbReference>